<gene>
    <name evidence="1" type="primary">xseA</name>
    <name type="ordered locus">BCB4264_A4290</name>
</gene>
<evidence type="ECO:0000255" key="1">
    <source>
        <dbReference type="HAMAP-Rule" id="MF_00378"/>
    </source>
</evidence>
<proteinExistence type="inferred from homology"/>
<accession>B7HB51</accession>
<feature type="chain" id="PRO_1000122040" description="Exodeoxyribonuclease 7 large subunit">
    <location>
        <begin position="1"/>
        <end position="452"/>
    </location>
</feature>
<keyword id="KW-0963">Cytoplasm</keyword>
<keyword id="KW-0269">Exonuclease</keyword>
<keyword id="KW-0378">Hydrolase</keyword>
<keyword id="KW-0540">Nuclease</keyword>
<dbReference type="EC" id="3.1.11.6" evidence="1"/>
<dbReference type="EMBL" id="CP001176">
    <property type="protein sequence ID" value="ACK59764.1"/>
    <property type="molecule type" value="Genomic_DNA"/>
</dbReference>
<dbReference type="RefSeq" id="WP_000415248.1">
    <property type="nucleotide sequence ID" value="NC_011725.1"/>
</dbReference>
<dbReference type="SMR" id="B7HB51"/>
<dbReference type="KEGG" id="bcb:BCB4264_A4290"/>
<dbReference type="HOGENOM" id="CLU_023625_3_1_9"/>
<dbReference type="Proteomes" id="UP000007096">
    <property type="component" value="Chromosome"/>
</dbReference>
<dbReference type="GO" id="GO:0005737">
    <property type="term" value="C:cytoplasm"/>
    <property type="evidence" value="ECO:0007669"/>
    <property type="project" value="UniProtKB-SubCell"/>
</dbReference>
<dbReference type="GO" id="GO:0009318">
    <property type="term" value="C:exodeoxyribonuclease VII complex"/>
    <property type="evidence" value="ECO:0007669"/>
    <property type="project" value="InterPro"/>
</dbReference>
<dbReference type="GO" id="GO:0008855">
    <property type="term" value="F:exodeoxyribonuclease VII activity"/>
    <property type="evidence" value="ECO:0007669"/>
    <property type="project" value="UniProtKB-UniRule"/>
</dbReference>
<dbReference type="GO" id="GO:0003676">
    <property type="term" value="F:nucleic acid binding"/>
    <property type="evidence" value="ECO:0007669"/>
    <property type="project" value="InterPro"/>
</dbReference>
<dbReference type="GO" id="GO:0006308">
    <property type="term" value="P:DNA catabolic process"/>
    <property type="evidence" value="ECO:0007669"/>
    <property type="project" value="UniProtKB-UniRule"/>
</dbReference>
<dbReference type="CDD" id="cd04489">
    <property type="entry name" value="ExoVII_LU_OBF"/>
    <property type="match status" value="1"/>
</dbReference>
<dbReference type="HAMAP" id="MF_00378">
    <property type="entry name" value="Exonuc_7_L"/>
    <property type="match status" value="1"/>
</dbReference>
<dbReference type="InterPro" id="IPR003753">
    <property type="entry name" value="Exonuc_VII_L"/>
</dbReference>
<dbReference type="InterPro" id="IPR020579">
    <property type="entry name" value="Exonuc_VII_lsu_C"/>
</dbReference>
<dbReference type="InterPro" id="IPR025824">
    <property type="entry name" value="OB-fold_nuc-bd_dom"/>
</dbReference>
<dbReference type="NCBIfam" id="TIGR00237">
    <property type="entry name" value="xseA"/>
    <property type="match status" value="1"/>
</dbReference>
<dbReference type="PANTHER" id="PTHR30008">
    <property type="entry name" value="EXODEOXYRIBONUCLEASE 7 LARGE SUBUNIT"/>
    <property type="match status" value="1"/>
</dbReference>
<dbReference type="PANTHER" id="PTHR30008:SF0">
    <property type="entry name" value="EXODEOXYRIBONUCLEASE 7 LARGE SUBUNIT"/>
    <property type="match status" value="1"/>
</dbReference>
<dbReference type="Pfam" id="PF02601">
    <property type="entry name" value="Exonuc_VII_L"/>
    <property type="match status" value="1"/>
</dbReference>
<dbReference type="Pfam" id="PF13742">
    <property type="entry name" value="tRNA_anti_2"/>
    <property type="match status" value="1"/>
</dbReference>
<reference key="1">
    <citation type="submission" date="2008-10" db="EMBL/GenBank/DDBJ databases">
        <title>Genome sequence of Bacillus cereus B4264.</title>
        <authorList>
            <person name="Dodson R.J."/>
            <person name="Durkin A.S."/>
            <person name="Rosovitz M.J."/>
            <person name="Rasko D.A."/>
            <person name="Hoffmaster A."/>
            <person name="Ravel J."/>
            <person name="Sutton G."/>
        </authorList>
    </citation>
    <scope>NUCLEOTIDE SEQUENCE [LARGE SCALE GENOMIC DNA]</scope>
    <source>
        <strain>B4264</strain>
    </source>
</reference>
<protein>
    <recommendedName>
        <fullName evidence="1">Exodeoxyribonuclease 7 large subunit</fullName>
        <ecNumber evidence="1">3.1.11.6</ecNumber>
    </recommendedName>
    <alternativeName>
        <fullName evidence="1">Exodeoxyribonuclease VII large subunit</fullName>
        <shortName evidence="1">Exonuclease VII large subunit</shortName>
    </alternativeName>
</protein>
<name>EX7L_BACC4</name>
<sequence>MEKQYLTVTALTRYIKTKIEYDPHLQSVWLKGEISNFKNHSRGHMYFTLKDENARIAAVMFAGHNRNIKFKPENGMKVLVKGKISVYEASGSYQIYIQDMQPDGVGNLHLAYEQLKVRLEEEGLFSQVYKKAIPPYAKTIGVITSPTGAAIRDIITTIKRRYPIGNVIVFPVLVQGESAAPSIVQAIRTANEMGEIDVLIVGRGGGSIEELWAFNEEMVARAIFKSEIPIISAVGHETDFTIADFVADLRAPTPTAAAELAAPNIIELQEKVLQRTLRLQRAMRELVHKKEEKLQVLQKSYAFRYPRQVYEQKEEQLDRALEQLVLAKERYIDKKVNQLKQLSFYLEKHHPSQKIMQTKVAVETLQKQLQREMQTLLQTKEFAFVRAAQKLEALSPLKVMMRGYGLVYDEEKQVLKSVKDVSLGDAVSVQLQDGILDCSVSGIEERELNDGK</sequence>
<organism>
    <name type="scientific">Bacillus cereus (strain B4264)</name>
    <dbReference type="NCBI Taxonomy" id="405532"/>
    <lineage>
        <taxon>Bacteria</taxon>
        <taxon>Bacillati</taxon>
        <taxon>Bacillota</taxon>
        <taxon>Bacilli</taxon>
        <taxon>Bacillales</taxon>
        <taxon>Bacillaceae</taxon>
        <taxon>Bacillus</taxon>
        <taxon>Bacillus cereus group</taxon>
    </lineage>
</organism>
<comment type="function">
    <text evidence="1">Bidirectionally degrades single-stranded DNA into large acid-insoluble oligonucleotides, which are then degraded further into small acid-soluble oligonucleotides.</text>
</comment>
<comment type="catalytic activity">
    <reaction evidence="1">
        <text>Exonucleolytic cleavage in either 5'- to 3'- or 3'- to 5'-direction to yield nucleoside 5'-phosphates.</text>
        <dbReference type="EC" id="3.1.11.6"/>
    </reaction>
</comment>
<comment type="subunit">
    <text evidence="1">Heterooligomer composed of large and small subunits.</text>
</comment>
<comment type="subcellular location">
    <subcellularLocation>
        <location evidence="1">Cytoplasm</location>
    </subcellularLocation>
</comment>
<comment type="similarity">
    <text evidence="1">Belongs to the XseA family.</text>
</comment>